<dbReference type="EMBL" id="CP000026">
    <property type="protein sequence ID" value="AAV79111.1"/>
    <property type="molecule type" value="Genomic_DNA"/>
</dbReference>
<dbReference type="RefSeq" id="WP_000729187.1">
    <property type="nucleotide sequence ID" value="NC_006511.1"/>
</dbReference>
<dbReference type="SMR" id="Q5PIU4"/>
<dbReference type="KEGG" id="spt:SPA3295"/>
<dbReference type="HOGENOM" id="CLU_093315_2_2_6"/>
<dbReference type="Proteomes" id="UP000008185">
    <property type="component" value="Chromosome"/>
</dbReference>
<dbReference type="GO" id="GO:0005829">
    <property type="term" value="C:cytosol"/>
    <property type="evidence" value="ECO:0007669"/>
    <property type="project" value="UniProtKB-ARBA"/>
</dbReference>
<dbReference type="GO" id="GO:1990904">
    <property type="term" value="C:ribonucleoprotein complex"/>
    <property type="evidence" value="ECO:0007669"/>
    <property type="project" value="UniProtKB-KW"/>
</dbReference>
<dbReference type="GO" id="GO:0005840">
    <property type="term" value="C:ribosome"/>
    <property type="evidence" value="ECO:0007669"/>
    <property type="project" value="UniProtKB-KW"/>
</dbReference>
<dbReference type="GO" id="GO:0019843">
    <property type="term" value="F:rRNA binding"/>
    <property type="evidence" value="ECO:0007669"/>
    <property type="project" value="UniProtKB-UniRule"/>
</dbReference>
<dbReference type="GO" id="GO:0003735">
    <property type="term" value="F:structural constituent of ribosome"/>
    <property type="evidence" value="ECO:0007669"/>
    <property type="project" value="InterPro"/>
</dbReference>
<dbReference type="GO" id="GO:0006412">
    <property type="term" value="P:translation"/>
    <property type="evidence" value="ECO:0007669"/>
    <property type="project" value="UniProtKB-UniRule"/>
</dbReference>
<dbReference type="CDD" id="cd06089">
    <property type="entry name" value="KOW_RPL26"/>
    <property type="match status" value="1"/>
</dbReference>
<dbReference type="FunFam" id="2.30.30.30:FF:000004">
    <property type="entry name" value="50S ribosomal protein L24"/>
    <property type="match status" value="1"/>
</dbReference>
<dbReference type="Gene3D" id="2.30.30.30">
    <property type="match status" value="1"/>
</dbReference>
<dbReference type="HAMAP" id="MF_01326_B">
    <property type="entry name" value="Ribosomal_uL24_B"/>
    <property type="match status" value="1"/>
</dbReference>
<dbReference type="InterPro" id="IPR005824">
    <property type="entry name" value="KOW"/>
</dbReference>
<dbReference type="InterPro" id="IPR014722">
    <property type="entry name" value="Rib_uL2_dom2"/>
</dbReference>
<dbReference type="InterPro" id="IPR003256">
    <property type="entry name" value="Ribosomal_uL24"/>
</dbReference>
<dbReference type="InterPro" id="IPR005825">
    <property type="entry name" value="Ribosomal_uL24_CS"/>
</dbReference>
<dbReference type="InterPro" id="IPR041988">
    <property type="entry name" value="Ribosomal_uL24_KOW"/>
</dbReference>
<dbReference type="InterPro" id="IPR008991">
    <property type="entry name" value="Translation_prot_SH3-like_sf"/>
</dbReference>
<dbReference type="NCBIfam" id="TIGR01079">
    <property type="entry name" value="rplX_bact"/>
    <property type="match status" value="1"/>
</dbReference>
<dbReference type="PANTHER" id="PTHR12903">
    <property type="entry name" value="MITOCHONDRIAL RIBOSOMAL PROTEIN L24"/>
    <property type="match status" value="1"/>
</dbReference>
<dbReference type="Pfam" id="PF00467">
    <property type="entry name" value="KOW"/>
    <property type="match status" value="1"/>
</dbReference>
<dbReference type="Pfam" id="PF17136">
    <property type="entry name" value="ribosomal_L24"/>
    <property type="match status" value="1"/>
</dbReference>
<dbReference type="SMART" id="SM00739">
    <property type="entry name" value="KOW"/>
    <property type="match status" value="1"/>
</dbReference>
<dbReference type="SUPFAM" id="SSF50104">
    <property type="entry name" value="Translation proteins SH3-like domain"/>
    <property type="match status" value="1"/>
</dbReference>
<dbReference type="PROSITE" id="PS01108">
    <property type="entry name" value="RIBOSOMAL_L24"/>
    <property type="match status" value="1"/>
</dbReference>
<name>RL24_SALPA</name>
<organism>
    <name type="scientific">Salmonella paratyphi A (strain ATCC 9150 / SARB42)</name>
    <dbReference type="NCBI Taxonomy" id="295319"/>
    <lineage>
        <taxon>Bacteria</taxon>
        <taxon>Pseudomonadati</taxon>
        <taxon>Pseudomonadota</taxon>
        <taxon>Gammaproteobacteria</taxon>
        <taxon>Enterobacterales</taxon>
        <taxon>Enterobacteriaceae</taxon>
        <taxon>Salmonella</taxon>
    </lineage>
</organism>
<accession>Q5PIU4</accession>
<evidence type="ECO:0000255" key="1">
    <source>
        <dbReference type="HAMAP-Rule" id="MF_01326"/>
    </source>
</evidence>
<evidence type="ECO:0000305" key="2"/>
<comment type="function">
    <text evidence="1">One of two assembly initiator proteins, it binds directly to the 5'-end of the 23S rRNA, where it nucleates assembly of the 50S subunit.</text>
</comment>
<comment type="function">
    <text evidence="1">One of the proteins that surrounds the polypeptide exit tunnel on the outside of the subunit.</text>
</comment>
<comment type="subunit">
    <text evidence="1">Part of the 50S ribosomal subunit.</text>
</comment>
<comment type="similarity">
    <text evidence="1">Belongs to the universal ribosomal protein uL24 family.</text>
</comment>
<keyword id="KW-0687">Ribonucleoprotein</keyword>
<keyword id="KW-0689">Ribosomal protein</keyword>
<keyword id="KW-0694">RNA-binding</keyword>
<keyword id="KW-0699">rRNA-binding</keyword>
<feature type="chain" id="PRO_0000241659" description="Large ribosomal subunit protein uL24">
    <location>
        <begin position="1"/>
        <end position="104"/>
    </location>
</feature>
<protein>
    <recommendedName>
        <fullName evidence="1">Large ribosomal subunit protein uL24</fullName>
    </recommendedName>
    <alternativeName>
        <fullName evidence="2">50S ribosomal protein L24</fullName>
    </alternativeName>
</protein>
<proteinExistence type="inferred from homology"/>
<reference key="1">
    <citation type="journal article" date="2004" name="Nat. Genet.">
        <title>Comparison of genome degradation in Paratyphi A and Typhi, human-restricted serovars of Salmonella enterica that cause typhoid.</title>
        <authorList>
            <person name="McClelland M."/>
            <person name="Sanderson K.E."/>
            <person name="Clifton S.W."/>
            <person name="Latreille P."/>
            <person name="Porwollik S."/>
            <person name="Sabo A."/>
            <person name="Meyer R."/>
            <person name="Bieri T."/>
            <person name="Ozersky P."/>
            <person name="McLellan M."/>
            <person name="Harkins C.R."/>
            <person name="Wang C."/>
            <person name="Nguyen C."/>
            <person name="Berghoff A."/>
            <person name="Elliott G."/>
            <person name="Kohlberg S."/>
            <person name="Strong C."/>
            <person name="Du F."/>
            <person name="Carter J."/>
            <person name="Kremizki C."/>
            <person name="Layman D."/>
            <person name="Leonard S."/>
            <person name="Sun H."/>
            <person name="Fulton L."/>
            <person name="Nash W."/>
            <person name="Miner T."/>
            <person name="Minx P."/>
            <person name="Delehaunty K."/>
            <person name="Fronick C."/>
            <person name="Magrini V."/>
            <person name="Nhan M."/>
            <person name="Warren W."/>
            <person name="Florea L."/>
            <person name="Spieth J."/>
            <person name="Wilson R.K."/>
        </authorList>
    </citation>
    <scope>NUCLEOTIDE SEQUENCE [LARGE SCALE GENOMIC DNA]</scope>
    <source>
        <strain>ATCC 9150 / SARB42</strain>
    </source>
</reference>
<sequence length="104" mass="11346">MAAKIRRDDEVIVLTGKDKGKRGKVKNVLSSGKVIVEGINLVKKHQKPVPALNQPGGIVEKEAAIQVSNVAIFNTATGKADRVGFRFEDGKKVRFFKSNSETIK</sequence>
<gene>
    <name evidence="1" type="primary">rplX</name>
    <name type="ordered locus">SPA3295</name>
</gene>